<name>LLDD_ECOL6</name>
<protein>
    <recommendedName>
        <fullName evidence="1">L-lactate dehydrogenase</fullName>
        <ecNumber evidence="1">1.1.-.-</ecNumber>
    </recommendedName>
</protein>
<evidence type="ECO:0000255" key="1">
    <source>
        <dbReference type="HAMAP-Rule" id="MF_01559"/>
    </source>
</evidence>
<reference key="1">
    <citation type="journal article" date="2002" name="Proc. Natl. Acad. Sci. U.S.A.">
        <title>Extensive mosaic structure revealed by the complete genome sequence of uropathogenic Escherichia coli.</title>
        <authorList>
            <person name="Welch R.A."/>
            <person name="Burland V."/>
            <person name="Plunkett G. III"/>
            <person name="Redford P."/>
            <person name="Roesch P."/>
            <person name="Rasko D."/>
            <person name="Buckles E.L."/>
            <person name="Liou S.-R."/>
            <person name="Boutin A."/>
            <person name="Hackett J."/>
            <person name="Stroud D."/>
            <person name="Mayhew G.F."/>
            <person name="Rose D.J."/>
            <person name="Zhou S."/>
            <person name="Schwartz D.C."/>
            <person name="Perna N.T."/>
            <person name="Mobley H.L.T."/>
            <person name="Donnenberg M.S."/>
            <person name="Blattner F.R."/>
        </authorList>
    </citation>
    <scope>NUCLEOTIDE SEQUENCE [LARGE SCALE GENOMIC DNA]</scope>
    <source>
        <strain>CFT073 / ATCC 700928 / UPEC</strain>
    </source>
</reference>
<organism>
    <name type="scientific">Escherichia coli O6:H1 (strain CFT073 / ATCC 700928 / UPEC)</name>
    <dbReference type="NCBI Taxonomy" id="199310"/>
    <lineage>
        <taxon>Bacteria</taxon>
        <taxon>Pseudomonadati</taxon>
        <taxon>Pseudomonadota</taxon>
        <taxon>Gammaproteobacteria</taxon>
        <taxon>Enterobacterales</taxon>
        <taxon>Enterobacteriaceae</taxon>
        <taxon>Escherichia</taxon>
    </lineage>
</organism>
<keyword id="KW-0997">Cell inner membrane</keyword>
<keyword id="KW-1003">Cell membrane</keyword>
<keyword id="KW-0285">Flavoprotein</keyword>
<keyword id="KW-0288">FMN</keyword>
<keyword id="KW-0472">Membrane</keyword>
<keyword id="KW-0560">Oxidoreductase</keyword>
<keyword id="KW-1185">Reference proteome</keyword>
<accession>Q8FCB1</accession>
<feature type="chain" id="PRO_0000206337" description="L-lactate dehydrogenase">
    <location>
        <begin position="1"/>
        <end position="396"/>
    </location>
</feature>
<feature type="domain" description="FMN hydroxy acid dehydrogenase" evidence="1">
    <location>
        <begin position="1"/>
        <end position="380"/>
    </location>
</feature>
<feature type="active site" description="Proton acceptor" evidence="1">
    <location>
        <position position="275"/>
    </location>
</feature>
<feature type="binding site" evidence="1">
    <location>
        <position position="24"/>
    </location>
    <ligand>
        <name>substrate</name>
    </ligand>
</feature>
<feature type="binding site" evidence="1">
    <location>
        <position position="106"/>
    </location>
    <ligand>
        <name>FMN</name>
        <dbReference type="ChEBI" id="CHEBI:58210"/>
    </ligand>
</feature>
<feature type="binding site" evidence="1">
    <location>
        <position position="127"/>
    </location>
    <ligand>
        <name>FMN</name>
        <dbReference type="ChEBI" id="CHEBI:58210"/>
    </ligand>
</feature>
<feature type="binding site" evidence="1">
    <location>
        <position position="129"/>
    </location>
    <ligand>
        <name>substrate</name>
    </ligand>
</feature>
<feature type="binding site" evidence="1">
    <location>
        <position position="155"/>
    </location>
    <ligand>
        <name>FMN</name>
        <dbReference type="ChEBI" id="CHEBI:58210"/>
    </ligand>
</feature>
<feature type="binding site" evidence="1">
    <location>
        <position position="164"/>
    </location>
    <ligand>
        <name>substrate</name>
    </ligand>
</feature>
<feature type="binding site" evidence="1">
    <location>
        <position position="251"/>
    </location>
    <ligand>
        <name>FMN</name>
        <dbReference type="ChEBI" id="CHEBI:58210"/>
    </ligand>
</feature>
<feature type="binding site" evidence="1">
    <location>
        <position position="278"/>
    </location>
    <ligand>
        <name>substrate</name>
    </ligand>
</feature>
<feature type="binding site" evidence="1">
    <location>
        <begin position="306"/>
        <end position="330"/>
    </location>
    <ligand>
        <name>FMN</name>
        <dbReference type="ChEBI" id="CHEBI:58210"/>
    </ligand>
</feature>
<sequence length="396" mass="42714">MIISAASDYRAAAQRILPPFLFHYMDGGAYSEYTLRRNVEDLSEVALRQRILKNMSDLSLETTLFNEKLSMPVALGPVGLCGMYARRGEVQAAKAADAHGIPFTLSTVSVCPIEEVAPAIKRPMWFQLYVLRDRGFMRNALERAKAAGCSTLVFTVDMPTPGARYRDAHSGMSGPNAAMRRYLQAVTHPQWAWDVGLNGRPHDLGNISAYLGKPTGLEDYIGWLGNNFDPSISWKDLEWIRDFWDGPMVIKGILDPEDARDAVRFGADGIVVSNHGGRQLDGVLSSARALPAIADAVKGDIAILADSGIRNGLDVVRMIALGADTVLLGRAFLYALATAGQAGVANLLNLIEKEMKVAMTLTGAKSISEITQDSLVQGLGKELPAALAPMAKGNAA</sequence>
<proteinExistence type="inferred from homology"/>
<comment type="function">
    <text evidence="1">Catalyzes the conversion of L-lactate to pyruvate. Is coupled to the respiratory chain.</text>
</comment>
<comment type="catalytic activity">
    <reaction evidence="1">
        <text>(S)-lactate + A = pyruvate + AH2</text>
        <dbReference type="Rhea" id="RHEA:45816"/>
        <dbReference type="ChEBI" id="CHEBI:13193"/>
        <dbReference type="ChEBI" id="CHEBI:15361"/>
        <dbReference type="ChEBI" id="CHEBI:16651"/>
        <dbReference type="ChEBI" id="CHEBI:17499"/>
    </reaction>
</comment>
<comment type="cofactor">
    <cofactor evidence="1">
        <name>FMN</name>
        <dbReference type="ChEBI" id="CHEBI:58210"/>
    </cofactor>
</comment>
<comment type="subcellular location">
    <subcellularLocation>
        <location evidence="1">Cell inner membrane</location>
        <topology evidence="1">Peripheral membrane protein</topology>
    </subcellularLocation>
</comment>
<comment type="similarity">
    <text evidence="1">Belongs to the FMN-dependent alpha-hydroxy acid dehydrogenase family.</text>
</comment>
<dbReference type="EC" id="1.1.-.-" evidence="1"/>
<dbReference type="EMBL" id="AE014075">
    <property type="protein sequence ID" value="AAN82863.1"/>
    <property type="molecule type" value="Genomic_DNA"/>
</dbReference>
<dbReference type="RefSeq" id="WP_000586976.1">
    <property type="nucleotide sequence ID" value="NZ_CP051263.1"/>
</dbReference>
<dbReference type="SMR" id="Q8FCB1"/>
<dbReference type="STRING" id="199310.c4427"/>
<dbReference type="GeneID" id="75173802"/>
<dbReference type="KEGG" id="ecc:c4427"/>
<dbReference type="eggNOG" id="COG1304">
    <property type="taxonomic scope" value="Bacteria"/>
</dbReference>
<dbReference type="HOGENOM" id="CLU_020639_0_0_6"/>
<dbReference type="BioCyc" id="ECOL199310:C4427-MONOMER"/>
<dbReference type="Proteomes" id="UP000001410">
    <property type="component" value="Chromosome"/>
</dbReference>
<dbReference type="GO" id="GO:0005886">
    <property type="term" value="C:plasma membrane"/>
    <property type="evidence" value="ECO:0007669"/>
    <property type="project" value="UniProtKB-SubCell"/>
</dbReference>
<dbReference type="GO" id="GO:0010181">
    <property type="term" value="F:FMN binding"/>
    <property type="evidence" value="ECO:0007669"/>
    <property type="project" value="InterPro"/>
</dbReference>
<dbReference type="GO" id="GO:0004459">
    <property type="term" value="F:L-lactate dehydrogenase activity"/>
    <property type="evidence" value="ECO:0007669"/>
    <property type="project" value="UniProtKB-UniRule"/>
</dbReference>
<dbReference type="GO" id="GO:0009060">
    <property type="term" value="P:aerobic respiration"/>
    <property type="evidence" value="ECO:0007669"/>
    <property type="project" value="TreeGrafter"/>
</dbReference>
<dbReference type="GO" id="GO:0006089">
    <property type="term" value="P:lactate metabolic process"/>
    <property type="evidence" value="ECO:0007669"/>
    <property type="project" value="UniProtKB-UniRule"/>
</dbReference>
<dbReference type="CDD" id="cd02809">
    <property type="entry name" value="alpha_hydroxyacid_oxid_FMN"/>
    <property type="match status" value="1"/>
</dbReference>
<dbReference type="FunFam" id="3.20.20.70:FF:000029">
    <property type="entry name" value="L-lactate dehydrogenase"/>
    <property type="match status" value="1"/>
</dbReference>
<dbReference type="Gene3D" id="3.20.20.70">
    <property type="entry name" value="Aldolase class I"/>
    <property type="match status" value="1"/>
</dbReference>
<dbReference type="HAMAP" id="MF_01559">
    <property type="entry name" value="L_lact_dehydr"/>
    <property type="match status" value="1"/>
</dbReference>
<dbReference type="InterPro" id="IPR013785">
    <property type="entry name" value="Aldolase_TIM"/>
</dbReference>
<dbReference type="InterPro" id="IPR012133">
    <property type="entry name" value="Alpha-hydoxy_acid_DH_FMN"/>
</dbReference>
<dbReference type="InterPro" id="IPR000262">
    <property type="entry name" value="FMN-dep_DH"/>
</dbReference>
<dbReference type="InterPro" id="IPR037396">
    <property type="entry name" value="FMN_HAD"/>
</dbReference>
<dbReference type="InterPro" id="IPR008259">
    <property type="entry name" value="FMN_hydac_DH_AS"/>
</dbReference>
<dbReference type="InterPro" id="IPR020920">
    <property type="entry name" value="LldD"/>
</dbReference>
<dbReference type="NCBIfam" id="NF033901">
    <property type="entry name" value="L_lactate_LldD"/>
    <property type="match status" value="1"/>
</dbReference>
<dbReference type="NCBIfam" id="NF008398">
    <property type="entry name" value="PRK11197.1"/>
    <property type="match status" value="1"/>
</dbReference>
<dbReference type="PANTHER" id="PTHR10578:SF85">
    <property type="entry name" value="L-LACTATE DEHYDROGENASE"/>
    <property type="match status" value="1"/>
</dbReference>
<dbReference type="PANTHER" id="PTHR10578">
    <property type="entry name" value="S -2-HYDROXY-ACID OXIDASE-RELATED"/>
    <property type="match status" value="1"/>
</dbReference>
<dbReference type="Pfam" id="PF01070">
    <property type="entry name" value="FMN_dh"/>
    <property type="match status" value="1"/>
</dbReference>
<dbReference type="PIRSF" id="PIRSF000138">
    <property type="entry name" value="Al-hdrx_acd_dh"/>
    <property type="match status" value="1"/>
</dbReference>
<dbReference type="SUPFAM" id="SSF51395">
    <property type="entry name" value="FMN-linked oxidoreductases"/>
    <property type="match status" value="1"/>
</dbReference>
<dbReference type="PROSITE" id="PS00557">
    <property type="entry name" value="FMN_HYDROXY_ACID_DH_1"/>
    <property type="match status" value="1"/>
</dbReference>
<dbReference type="PROSITE" id="PS51349">
    <property type="entry name" value="FMN_HYDROXY_ACID_DH_2"/>
    <property type="match status" value="1"/>
</dbReference>
<gene>
    <name evidence="1" type="primary">lldD</name>
    <name type="ordered locus">c4427</name>
</gene>